<accession>Q467Z4</accession>
<comment type="function">
    <text evidence="1">S-adenosyl-L-methionine-dependent methyltransferase that catalyzes the trimethylation of the amino group of the modified target histidine residue in translation elongation factor 2 (EF-2), to form an intermediate called diphthine. The three successive methylation reactions represent the second step of diphthamide biosynthesis.</text>
</comment>
<comment type="catalytic activity">
    <reaction evidence="1">
        <text>2-[(3S)-amino-3-carboxypropyl]-L-histidyl-[translation elongation factor 2] + 3 S-adenosyl-L-methionine = diphthine-[translation elongation factor 2] + 3 S-adenosyl-L-homocysteine + 3 H(+)</text>
        <dbReference type="Rhea" id="RHEA:36415"/>
        <dbReference type="Rhea" id="RHEA-COMP:9749"/>
        <dbReference type="Rhea" id="RHEA-COMP:10172"/>
        <dbReference type="ChEBI" id="CHEBI:15378"/>
        <dbReference type="ChEBI" id="CHEBI:57856"/>
        <dbReference type="ChEBI" id="CHEBI:59789"/>
        <dbReference type="ChEBI" id="CHEBI:73995"/>
        <dbReference type="ChEBI" id="CHEBI:82696"/>
        <dbReference type="EC" id="2.1.1.98"/>
    </reaction>
</comment>
<comment type="pathway">
    <text evidence="1">Protein modification; peptidyl-diphthamide biosynthesis.</text>
</comment>
<comment type="subunit">
    <text evidence="1">Homodimer.</text>
</comment>
<comment type="similarity">
    <text evidence="1">Belongs to the diphthine synthase family.</text>
</comment>
<reference key="1">
    <citation type="journal article" date="2006" name="J. Bacteriol.">
        <title>The Methanosarcina barkeri genome: comparative analysis with Methanosarcina acetivorans and Methanosarcina mazei reveals extensive rearrangement within methanosarcinal genomes.</title>
        <authorList>
            <person name="Maeder D.L."/>
            <person name="Anderson I."/>
            <person name="Brettin T.S."/>
            <person name="Bruce D.C."/>
            <person name="Gilna P."/>
            <person name="Han C.S."/>
            <person name="Lapidus A."/>
            <person name="Metcalf W.W."/>
            <person name="Saunders E."/>
            <person name="Tapia R."/>
            <person name="Sowers K.R."/>
        </authorList>
    </citation>
    <scope>NUCLEOTIDE SEQUENCE [LARGE SCALE GENOMIC DNA]</scope>
    <source>
        <strain>Fusaro / DSM 804</strain>
    </source>
</reference>
<feature type="chain" id="PRO_1000064817" description="Diphthine synthase">
    <location>
        <begin position="1"/>
        <end position="266"/>
    </location>
</feature>
<feature type="binding site" evidence="1">
    <location>
        <position position="9"/>
    </location>
    <ligand>
        <name>S-adenosyl-L-methionine</name>
        <dbReference type="ChEBI" id="CHEBI:59789"/>
    </ligand>
</feature>
<feature type="binding site" evidence="1">
    <location>
        <position position="84"/>
    </location>
    <ligand>
        <name>S-adenosyl-L-methionine</name>
        <dbReference type="ChEBI" id="CHEBI:59789"/>
    </ligand>
</feature>
<feature type="binding site" evidence="1">
    <location>
        <position position="87"/>
    </location>
    <ligand>
        <name>S-adenosyl-L-methionine</name>
        <dbReference type="ChEBI" id="CHEBI:59789"/>
    </ligand>
</feature>
<feature type="binding site" evidence="1">
    <location>
        <begin position="112"/>
        <end position="113"/>
    </location>
    <ligand>
        <name>S-adenosyl-L-methionine</name>
        <dbReference type="ChEBI" id="CHEBI:59789"/>
    </ligand>
</feature>
<feature type="binding site" evidence="1">
    <location>
        <position position="169"/>
    </location>
    <ligand>
        <name>S-adenosyl-L-methionine</name>
        <dbReference type="ChEBI" id="CHEBI:59789"/>
    </ligand>
</feature>
<feature type="binding site" evidence="1">
    <location>
        <position position="210"/>
    </location>
    <ligand>
        <name>S-adenosyl-L-methionine</name>
        <dbReference type="ChEBI" id="CHEBI:59789"/>
    </ligand>
</feature>
<feature type="binding site" evidence="1">
    <location>
        <position position="235"/>
    </location>
    <ligand>
        <name>S-adenosyl-L-methionine</name>
        <dbReference type="ChEBI" id="CHEBI:59789"/>
    </ligand>
</feature>
<protein>
    <recommendedName>
        <fullName evidence="1">Diphthine synthase</fullName>
        <ecNumber evidence="1">2.1.1.98</ecNumber>
    </recommendedName>
    <alternativeName>
        <fullName evidence="1">Diphthamide biosynthesis methyltransferase</fullName>
    </alternativeName>
</protein>
<proteinExistence type="inferred from homology"/>
<evidence type="ECO:0000255" key="1">
    <source>
        <dbReference type="HAMAP-Rule" id="MF_01084"/>
    </source>
</evidence>
<name>DPHB_METBF</name>
<keyword id="KW-0489">Methyltransferase</keyword>
<keyword id="KW-0949">S-adenosyl-L-methionine</keyword>
<keyword id="KW-0808">Transferase</keyword>
<sequence length="266" mass="29553">MLTFIGLGLFDEYDISLKGLEAIREADMVYAEFYTSCLMGTNLEKMEKLYGKKVFLLSREDVEQHPDWLSKAKNRNLCFLTGGDTMVSTTHVDLRLRAEKLGIDTRLIHGASIASAVSGLTGLQNYRFGKSASIPHPYESRRGTRIISETPYDTIKQNLELGLHTLVFLDIDKEKGYMTVNTALELLLEVEEKRGEGIMRGAAAVGIARAGSEKPVIRADYAENLKDFNFGKPLHILVIPGKLHFLEAEALVKLAGGPVGFMKEVE</sequence>
<dbReference type="EC" id="2.1.1.98" evidence="1"/>
<dbReference type="EMBL" id="CP000099">
    <property type="protein sequence ID" value="AAZ71798.1"/>
    <property type="molecule type" value="Genomic_DNA"/>
</dbReference>
<dbReference type="SMR" id="Q467Z4"/>
<dbReference type="STRING" id="269797.Mbar_A2900"/>
<dbReference type="PaxDb" id="269797-Mbar_A2900"/>
<dbReference type="KEGG" id="mba:Mbar_A2900"/>
<dbReference type="eggNOG" id="arCOG04161">
    <property type="taxonomic scope" value="Archaea"/>
</dbReference>
<dbReference type="HOGENOM" id="CLU_066040_0_0_2"/>
<dbReference type="OrthoDB" id="39139at2157"/>
<dbReference type="UniPathway" id="UPA00559"/>
<dbReference type="GO" id="GO:0004164">
    <property type="term" value="F:diphthine synthase activity"/>
    <property type="evidence" value="ECO:0007669"/>
    <property type="project" value="UniProtKB-UniRule"/>
</dbReference>
<dbReference type="GO" id="GO:0032259">
    <property type="term" value="P:methylation"/>
    <property type="evidence" value="ECO:0007669"/>
    <property type="project" value="UniProtKB-KW"/>
</dbReference>
<dbReference type="GO" id="GO:0017183">
    <property type="term" value="P:protein histidyl modification to diphthamide"/>
    <property type="evidence" value="ECO:0007669"/>
    <property type="project" value="UniProtKB-UniRule"/>
</dbReference>
<dbReference type="CDD" id="cd11647">
    <property type="entry name" value="DHP5_DphB"/>
    <property type="match status" value="1"/>
</dbReference>
<dbReference type="Gene3D" id="3.40.1010.10">
    <property type="entry name" value="Cobalt-precorrin-4 Transmethylase, Domain 1"/>
    <property type="match status" value="1"/>
</dbReference>
<dbReference type="Gene3D" id="3.30.950.10">
    <property type="entry name" value="Methyltransferase, Cobalt-precorrin-4 Transmethylase, Domain 2"/>
    <property type="match status" value="1"/>
</dbReference>
<dbReference type="HAMAP" id="MF_01084">
    <property type="entry name" value="Diphthine_synth"/>
    <property type="match status" value="1"/>
</dbReference>
<dbReference type="InterPro" id="IPR000878">
    <property type="entry name" value="4pyrrol_Mease"/>
</dbReference>
<dbReference type="InterPro" id="IPR035996">
    <property type="entry name" value="4pyrrol_Methylase_sf"/>
</dbReference>
<dbReference type="InterPro" id="IPR014777">
    <property type="entry name" value="4pyrrole_Mease_sub1"/>
</dbReference>
<dbReference type="InterPro" id="IPR014776">
    <property type="entry name" value="4pyrrole_Mease_sub2"/>
</dbReference>
<dbReference type="InterPro" id="IPR004551">
    <property type="entry name" value="Dphthn_synthase"/>
</dbReference>
<dbReference type="NCBIfam" id="TIGR00522">
    <property type="entry name" value="dph5"/>
    <property type="match status" value="1"/>
</dbReference>
<dbReference type="PANTHER" id="PTHR10882:SF0">
    <property type="entry name" value="DIPHTHINE METHYL ESTER SYNTHASE"/>
    <property type="match status" value="1"/>
</dbReference>
<dbReference type="PANTHER" id="PTHR10882">
    <property type="entry name" value="DIPHTHINE SYNTHASE"/>
    <property type="match status" value="1"/>
</dbReference>
<dbReference type="Pfam" id="PF00590">
    <property type="entry name" value="TP_methylase"/>
    <property type="match status" value="1"/>
</dbReference>
<dbReference type="PIRSF" id="PIRSF036432">
    <property type="entry name" value="Diphthine_synth"/>
    <property type="match status" value="1"/>
</dbReference>
<dbReference type="SUPFAM" id="SSF53790">
    <property type="entry name" value="Tetrapyrrole methylase"/>
    <property type="match status" value="1"/>
</dbReference>
<organism>
    <name type="scientific">Methanosarcina barkeri (strain Fusaro / DSM 804)</name>
    <dbReference type="NCBI Taxonomy" id="269797"/>
    <lineage>
        <taxon>Archaea</taxon>
        <taxon>Methanobacteriati</taxon>
        <taxon>Methanobacteriota</taxon>
        <taxon>Stenosarchaea group</taxon>
        <taxon>Methanomicrobia</taxon>
        <taxon>Methanosarcinales</taxon>
        <taxon>Methanosarcinaceae</taxon>
        <taxon>Methanosarcina</taxon>
    </lineage>
</organism>
<gene>
    <name evidence="1" type="primary">dphB</name>
    <name type="ordered locus">Mbar_A2900</name>
</gene>